<organism>
    <name type="scientific">Arabidopsis thaliana</name>
    <name type="common">Mouse-ear cress</name>
    <dbReference type="NCBI Taxonomy" id="3702"/>
    <lineage>
        <taxon>Eukaryota</taxon>
        <taxon>Viridiplantae</taxon>
        <taxon>Streptophyta</taxon>
        <taxon>Embryophyta</taxon>
        <taxon>Tracheophyta</taxon>
        <taxon>Spermatophyta</taxon>
        <taxon>Magnoliopsida</taxon>
        <taxon>eudicotyledons</taxon>
        <taxon>Gunneridae</taxon>
        <taxon>Pentapetalae</taxon>
        <taxon>rosids</taxon>
        <taxon>malvids</taxon>
        <taxon>Brassicales</taxon>
        <taxon>Brassicaceae</taxon>
        <taxon>Camelineae</taxon>
        <taxon>Arabidopsis</taxon>
    </lineage>
</organism>
<comment type="function">
    <text evidence="5 6 7 8">Cytoprotective ribonuclease (RNase) required for resistance to abiotic stresses, acting as a positive regulator of mRNA decapping during stress (PubMed:25736060). Essential for the integrity and function of cytoplasmic messenger ribonucleoprotein (mRNP) complexes called stress granules (SGs) and processing bodies (PBs), sites of post-transcriptional gene regulation during stress (e.g. salt and heat) (PubMed:25736060). Involved in gibberellic acid (GA) biosynthesis (PubMed:25205572). Essential for stress tolerance, probably by regulating mRNAs entering the secretory pathway (PubMed:20484005). Component of stress granules (SGs) that regulates growth under salt stress by modulating levels of GA20OX3 mRNA. Binds GA20OX3 mRNA (PubMed:25205572). May inhibit the degradation of mRNAs involved in stress adaptation (PubMed:26237081).</text>
</comment>
<comment type="activity regulation">
    <text evidence="7">Repressed by the specific inhibitor 3',5'-deoxythymidine bisphosphate (pdTp); this RNase activity inhibition impairs subcellular relocation upon abiotic stress and leads to reduced stress resistance.</text>
</comment>
<comment type="subcellular location">
    <subcellularLocation>
        <location evidence="5 6 7">Cytoplasm</location>
    </subcellularLocation>
    <subcellularLocation>
        <location evidence="6 7">Cytoplasmic granule</location>
    </subcellularLocation>
    <subcellularLocation>
        <location evidence="5">Cytoplasm</location>
        <location evidence="5">Perinuclear region</location>
    </subcellularLocation>
    <subcellularLocation>
        <location evidence="5">Endoplasmic reticulum</location>
    </subcellularLocation>
    <text evidence="5 6 7">Accumulates heterogeneously in the cytosol, in patches around the nucleus and in the cell periphery, and relocates transiently to a diffuse pattern in response to salt stress (PubMed:20484005). Accumulates in cytoplasmic stress granules (SGs) and processing bodies (PBs) in response to abiotic stresses (e.g. salt and heat) (PubMed:25205572, PubMed:25736060).</text>
</comment>
<comment type="alternative products">
    <event type="alternative splicing"/>
    <isoform>
        <id>Q8VZG7-1</id>
        <name>1</name>
        <sequence type="displayed"/>
    </isoform>
    <isoform>
        <id>Q8VZG7-2</id>
        <name>2</name>
        <sequence type="described" ref="VSP_058574"/>
    </isoform>
</comment>
<comment type="tissue specificity">
    <text evidence="4 5">Expressed in seeds, leaves, flowers, roots and siliques (at protein level) (PubMed:20396901, PubMed:20484005). Accumulates in the cap and elongation zone of the root apices (at protein level) (PubMed:20484005).</text>
</comment>
<comment type="induction">
    <text evidence="6">Accumulates after salt treatment.</text>
</comment>
<comment type="domain">
    <text evidence="7">TNase-like domains are required for relocation to cytoplasmic foci upon abiotic stresses.</text>
</comment>
<comment type="disruption phenotype">
    <text evidence="4 5 6 7 8">Normal vegetative growth, flowering time and flower morphology (PubMed:20396901). Reduced expression of enzyme involved in GA biosynthesis leading to reduced levels of GA-4 (e.g. GA20OX3). Slower growth in salt conditions (PubMed:25205572). The double mutant tsn1 tsn2 exhibits severe alteration in germination, growth, and survival under high salinity stress. Reduced levels of stress-regulated mRNAs encoding secreted proteins (PubMed:20484005). Abnormal stress granules (SGs) and processing bodies (PBs) assembly accompanied by reduced uncapped RNAs levels in heat-stressed double mutant tsn1 tsn2 (PubMed:25736060). The double mutant tsn1 tsn2 is also showing enriched uncapping and subsequent degradation of mRNAs involved in stress adaptation (PubMed:26237081).</text>
</comment>
<comment type="sequence caution" evidence="10">
    <conflict type="erroneous gene model prediction">
        <sequence resource="EMBL-CDS" id="CAB87924"/>
    </conflict>
</comment>
<dbReference type="EC" id="3.1.-.-" evidence="7"/>
<dbReference type="EMBL" id="AL163912">
    <property type="protein sequence ID" value="CAB87924.1"/>
    <property type="status" value="ALT_SEQ"/>
    <property type="molecule type" value="Genomic_DNA"/>
</dbReference>
<dbReference type="EMBL" id="CP002688">
    <property type="protein sequence ID" value="AED91140.1"/>
    <property type="molecule type" value="Genomic_DNA"/>
</dbReference>
<dbReference type="EMBL" id="CP002688">
    <property type="protein sequence ID" value="AED91141.1"/>
    <property type="molecule type" value="Genomic_DNA"/>
</dbReference>
<dbReference type="EMBL" id="AY064975">
    <property type="protein sequence ID" value="AAL57629.1"/>
    <property type="molecule type" value="mRNA"/>
</dbReference>
<dbReference type="PIR" id="T49874">
    <property type="entry name" value="T49874"/>
</dbReference>
<dbReference type="RefSeq" id="NP_001154697.2">
    <molecule id="Q8VZG7-2"/>
    <property type="nucleotide sequence ID" value="NM_001161225.2"/>
</dbReference>
<dbReference type="RefSeq" id="NP_196352.2">
    <molecule id="Q8VZG7-1"/>
    <property type="nucleotide sequence ID" value="NM_120817.3"/>
</dbReference>
<dbReference type="SMR" id="Q8VZG7"/>
<dbReference type="FunCoup" id="Q8VZG7">
    <property type="interactions" value="4644"/>
</dbReference>
<dbReference type="IntAct" id="Q8VZG7">
    <property type="interactions" value="1"/>
</dbReference>
<dbReference type="STRING" id="3702.Q8VZG7"/>
<dbReference type="GlyGen" id="Q8VZG7">
    <property type="glycosylation" value="1 site"/>
</dbReference>
<dbReference type="iPTMnet" id="Q8VZG7"/>
<dbReference type="PaxDb" id="3702-AT5G07350.2"/>
<dbReference type="ProteomicsDB" id="234592">
    <molecule id="Q8VZG7-1"/>
</dbReference>
<dbReference type="EnsemblPlants" id="AT5G07350.1">
    <molecule id="Q8VZG7-1"/>
    <property type="protein sequence ID" value="AT5G07350.1"/>
    <property type="gene ID" value="AT5G07350"/>
</dbReference>
<dbReference type="EnsemblPlants" id="AT5G07350.2">
    <molecule id="Q8VZG7-2"/>
    <property type="protein sequence ID" value="AT5G07350.2"/>
    <property type="gene ID" value="AT5G07350"/>
</dbReference>
<dbReference type="GeneID" id="830626"/>
<dbReference type="Gramene" id="AT5G07350.1">
    <molecule id="Q8VZG7-1"/>
    <property type="protein sequence ID" value="AT5G07350.1"/>
    <property type="gene ID" value="AT5G07350"/>
</dbReference>
<dbReference type="Gramene" id="AT5G07350.2">
    <molecule id="Q8VZG7-2"/>
    <property type="protein sequence ID" value="AT5G07350.2"/>
    <property type="gene ID" value="AT5G07350"/>
</dbReference>
<dbReference type="KEGG" id="ath:AT5G07350"/>
<dbReference type="Araport" id="AT5G07350"/>
<dbReference type="TAIR" id="AT5G07350">
    <property type="gene designation" value="TUDOR1"/>
</dbReference>
<dbReference type="eggNOG" id="KOG2039">
    <property type="taxonomic scope" value="Eukaryota"/>
</dbReference>
<dbReference type="HOGENOM" id="CLU_005966_2_0_1"/>
<dbReference type="InParanoid" id="Q8VZG7"/>
<dbReference type="OMA" id="CNLAYIN"/>
<dbReference type="PhylomeDB" id="Q8VZG7"/>
<dbReference type="BRENDA" id="3.1.31.1">
    <property type="organism ID" value="399"/>
</dbReference>
<dbReference type="PRO" id="PR:Q8VZG7"/>
<dbReference type="Proteomes" id="UP000006548">
    <property type="component" value="Chromosome 5"/>
</dbReference>
<dbReference type="ExpressionAtlas" id="Q8VZG7">
    <property type="expression patterns" value="baseline and differential"/>
</dbReference>
<dbReference type="GO" id="GO:0005737">
    <property type="term" value="C:cytoplasm"/>
    <property type="evidence" value="ECO:0000314"/>
    <property type="project" value="UniProtKB"/>
</dbReference>
<dbReference type="GO" id="GO:0010494">
    <property type="term" value="C:cytoplasmic stress granule"/>
    <property type="evidence" value="ECO:0000314"/>
    <property type="project" value="UniProtKB"/>
</dbReference>
<dbReference type="GO" id="GO:0005829">
    <property type="term" value="C:cytosol"/>
    <property type="evidence" value="ECO:0000314"/>
    <property type="project" value="UniProtKB"/>
</dbReference>
<dbReference type="GO" id="GO:0005783">
    <property type="term" value="C:endoplasmic reticulum"/>
    <property type="evidence" value="ECO:0000314"/>
    <property type="project" value="UniProtKB"/>
</dbReference>
<dbReference type="GO" id="GO:0005635">
    <property type="term" value="C:nuclear envelope"/>
    <property type="evidence" value="ECO:0000314"/>
    <property type="project" value="UniProtKB"/>
</dbReference>
<dbReference type="GO" id="GO:0000932">
    <property type="term" value="C:P-body"/>
    <property type="evidence" value="ECO:0000314"/>
    <property type="project" value="UniProtKB"/>
</dbReference>
<dbReference type="GO" id="GO:0048471">
    <property type="term" value="C:perinuclear region of cytoplasm"/>
    <property type="evidence" value="ECO:0007669"/>
    <property type="project" value="UniProtKB-SubCell"/>
</dbReference>
<dbReference type="GO" id="GO:0009505">
    <property type="term" value="C:plant-type cell wall"/>
    <property type="evidence" value="ECO:0007005"/>
    <property type="project" value="TAIR"/>
</dbReference>
<dbReference type="GO" id="GO:0005886">
    <property type="term" value="C:plasma membrane"/>
    <property type="evidence" value="ECO:0007005"/>
    <property type="project" value="TAIR"/>
</dbReference>
<dbReference type="GO" id="GO:0031332">
    <property type="term" value="C:RNAi effector complex"/>
    <property type="evidence" value="ECO:0007669"/>
    <property type="project" value="InterPro"/>
</dbReference>
<dbReference type="GO" id="GO:0003729">
    <property type="term" value="F:mRNA binding"/>
    <property type="evidence" value="ECO:0000314"/>
    <property type="project" value="TAIR"/>
</dbReference>
<dbReference type="GO" id="GO:0004518">
    <property type="term" value="F:nuclease activity"/>
    <property type="evidence" value="ECO:0007669"/>
    <property type="project" value="UniProtKB-KW"/>
</dbReference>
<dbReference type="GO" id="GO:0003723">
    <property type="term" value="F:RNA binding"/>
    <property type="evidence" value="ECO:0000314"/>
    <property type="project" value="UniProtKB"/>
</dbReference>
<dbReference type="GO" id="GO:0034605">
    <property type="term" value="P:cellular response to heat"/>
    <property type="evidence" value="ECO:0000314"/>
    <property type="project" value="UniProtKB"/>
</dbReference>
<dbReference type="GO" id="GO:0006402">
    <property type="term" value="P:mRNA catabolic process"/>
    <property type="evidence" value="ECO:0000315"/>
    <property type="project" value="UniProtKB"/>
</dbReference>
<dbReference type="GO" id="GO:0006397">
    <property type="term" value="P:mRNA processing"/>
    <property type="evidence" value="ECO:0000315"/>
    <property type="project" value="UniProtKB"/>
</dbReference>
<dbReference type="GO" id="GO:0010372">
    <property type="term" value="P:positive regulation of gibberellin biosynthetic process"/>
    <property type="evidence" value="ECO:0000315"/>
    <property type="project" value="UniProtKB"/>
</dbReference>
<dbReference type="GO" id="GO:0031047">
    <property type="term" value="P:regulatory ncRNA-mediated gene silencing"/>
    <property type="evidence" value="ECO:0007669"/>
    <property type="project" value="InterPro"/>
</dbReference>
<dbReference type="GO" id="GO:0009651">
    <property type="term" value="P:response to salt stress"/>
    <property type="evidence" value="ECO:0000315"/>
    <property type="project" value="UniProtKB"/>
</dbReference>
<dbReference type="CDD" id="cd20443">
    <property type="entry name" value="Tudor_AtTudor1-like"/>
    <property type="match status" value="1"/>
</dbReference>
<dbReference type="FunFam" id="2.40.50.90:FF:000010">
    <property type="entry name" value="Ribonuclease"/>
    <property type="match status" value="1"/>
</dbReference>
<dbReference type="FunFam" id="2.40.50.90:FF:000011">
    <property type="entry name" value="Ribonuclease"/>
    <property type="match status" value="1"/>
</dbReference>
<dbReference type="FunFam" id="2.40.50.90:FF:000015">
    <property type="entry name" value="Ribonuclease"/>
    <property type="match status" value="1"/>
</dbReference>
<dbReference type="FunFam" id="2.40.50.90:FF:000018">
    <property type="entry name" value="Ribonuclease"/>
    <property type="match status" value="1"/>
</dbReference>
<dbReference type="FunFam" id="2.30.30.140:FF:000018">
    <property type="entry name" value="Serine/threonine-protein kinase 31"/>
    <property type="match status" value="1"/>
</dbReference>
<dbReference type="Gene3D" id="2.30.30.140">
    <property type="match status" value="1"/>
</dbReference>
<dbReference type="Gene3D" id="2.40.50.90">
    <property type="match status" value="5"/>
</dbReference>
<dbReference type="InterPro" id="IPR016685">
    <property type="entry name" value="Silence_cplx_Nase-comp_TudorSN"/>
</dbReference>
<dbReference type="InterPro" id="IPR035437">
    <property type="entry name" value="SNase_OB-fold_sf"/>
</dbReference>
<dbReference type="InterPro" id="IPR016071">
    <property type="entry name" value="Staphylococal_nuclease_OB-fold"/>
</dbReference>
<dbReference type="InterPro" id="IPR002999">
    <property type="entry name" value="Tudor"/>
</dbReference>
<dbReference type="InterPro" id="IPR047395">
    <property type="entry name" value="Tudor_AtTudor1-like"/>
</dbReference>
<dbReference type="PANTHER" id="PTHR12302">
    <property type="entry name" value="EBNA2 BINDING PROTEIN P100"/>
    <property type="match status" value="1"/>
</dbReference>
<dbReference type="PANTHER" id="PTHR12302:SF9">
    <property type="entry name" value="RIBONUCLEASE TUDOR 1"/>
    <property type="match status" value="1"/>
</dbReference>
<dbReference type="Pfam" id="PF00565">
    <property type="entry name" value="SNase"/>
    <property type="match status" value="4"/>
</dbReference>
<dbReference type="Pfam" id="PF00567">
    <property type="entry name" value="TUDOR"/>
    <property type="match status" value="1"/>
</dbReference>
<dbReference type="PIRSF" id="PIRSF017179">
    <property type="entry name" value="RISC-Tudor-SN"/>
    <property type="match status" value="1"/>
</dbReference>
<dbReference type="SMART" id="SM00318">
    <property type="entry name" value="SNc"/>
    <property type="match status" value="4"/>
</dbReference>
<dbReference type="SMART" id="SM00333">
    <property type="entry name" value="TUDOR"/>
    <property type="match status" value="1"/>
</dbReference>
<dbReference type="SUPFAM" id="SSF50199">
    <property type="entry name" value="Staphylococcal nuclease"/>
    <property type="match status" value="5"/>
</dbReference>
<dbReference type="SUPFAM" id="SSF63748">
    <property type="entry name" value="Tudor/PWWP/MBT"/>
    <property type="match status" value="1"/>
</dbReference>
<dbReference type="PROSITE" id="PS50830">
    <property type="entry name" value="TNASE_3"/>
    <property type="match status" value="4"/>
</dbReference>
<dbReference type="PROSITE" id="PS50304">
    <property type="entry name" value="TUDOR"/>
    <property type="match status" value="1"/>
</dbReference>
<name>TSN1_ARATH</name>
<proteinExistence type="evidence at protein level"/>
<sequence length="991" mass="108235">MATGAENQWLKGRVKAVTSGDCLVITALSHNRAGPPPEKTITFSSLMAPKMARRGGIDEPFAWESKEFLRKLCIGKEVAFKVDYKVEAIAGREFGSVFLGNENLAKLVVKTGWAKVREPGQQNQDKVSPYIKELLQLEELAKQEGYGRWSKVPGAAEASIRNLPPSAIGDSAGFDAMGLLAANKGKPMEGIVEQVRDGSTIRVYLLPEFQFVQVFVAGVQAPSMGRRTTNGSVVETVPDEPNGDVSAESRGPLTTAQRLAASAASSVEVSSDPFATEAKYFTEHRVLSRDVRIVLEGVDKFNNLIGSVHYSDGETVKDLGLELVENGLAKFVEWSANMMEEEAKKKLKAAELQCKKDKVKMWANYVPPATNSKAIHDQNFTGKVVEVVSGDCLIVADDAVPFGSPAAERRVCLSSIRSPKMGNPRREEKPAPYAREAREFLRQRLIGKQVIVQMEYSRKVTQGDGPTTSGAADRFMDFGSVFLPSAAKADSDEVTAPPAAAIAGSQPVGVNIAELVLVRGFGNVVRHRDFEERSNHYDALLAAEARALAGKKGIHSAKESPAMHITDLTVSAAKKAKDFLPSLQRIRRIPAVVEYVLSGHRFKLYIPKITCSIAFSFSGVRCPGRGEPYSEEAISVMRRRIMQRDVEIEVETVDRTGTFLGSMWESRTNVATVLLEAGLAKMQTSFGADRIAEAHLLEQAERSAKNQKLKIWENYVEGEEVSNGNTNTVETRQKETLKVVVTEVLGGGRFYVQSAGDQKIASIQNQLASLSIKDAPIIGSFNPKRGDIVLAQFSLDNSWNRAMIVTAPRAAVQSPDEKFEVFYIDYGNQETVPYSAIRPIDPSVSAAPGLAQLCRLAYIKVPSLEDDFGPEAGEYLHTVTLGSGKEFKAVIEERDTSGGKVKGQGTGTEFVVTLIAVDDEISVNAAMLQEGIARMEKRQKWGHKGKQAALDALEKFQEEARKSRIGIWQYGDIESDDEDTGPARKPAGGRR</sequence>
<keyword id="KW-0007">Acetylation</keyword>
<keyword id="KW-0025">Alternative splicing</keyword>
<keyword id="KW-0963">Cytoplasm</keyword>
<keyword id="KW-0256">Endoplasmic reticulum</keyword>
<keyword id="KW-0378">Hydrolase</keyword>
<keyword id="KW-0540">Nuclease</keyword>
<keyword id="KW-0597">Phosphoprotein</keyword>
<keyword id="KW-1185">Reference proteome</keyword>
<keyword id="KW-0677">Repeat</keyword>
<keyword id="KW-0694">RNA-binding</keyword>
<protein>
    <recommendedName>
        <fullName evidence="9">Ribonuclease TUDOR 1</fullName>
        <shortName evidence="9">AtTudor1</shortName>
        <shortName evidence="9">TUDOR-SN protein 1</shortName>
        <ecNumber evidence="7">3.1.-.-</ecNumber>
    </recommendedName>
</protein>
<evidence type="ECO:0000255" key="1">
    <source>
        <dbReference type="PROSITE-ProRule" id="PRU00211"/>
    </source>
</evidence>
<evidence type="ECO:0000255" key="2">
    <source>
        <dbReference type="PROSITE-ProRule" id="PRU00272"/>
    </source>
</evidence>
<evidence type="ECO:0000256" key="3">
    <source>
        <dbReference type="SAM" id="MobiDB-lite"/>
    </source>
</evidence>
<evidence type="ECO:0000269" key="4">
    <source>
    </source>
</evidence>
<evidence type="ECO:0000269" key="5">
    <source>
    </source>
</evidence>
<evidence type="ECO:0000269" key="6">
    <source>
    </source>
</evidence>
<evidence type="ECO:0000269" key="7">
    <source>
    </source>
</evidence>
<evidence type="ECO:0000269" key="8">
    <source>
    </source>
</evidence>
<evidence type="ECO:0000303" key="9">
    <source>
    </source>
</evidence>
<evidence type="ECO:0000305" key="10"/>
<evidence type="ECO:0000312" key="11">
    <source>
        <dbReference type="Araport" id="AT5G07350"/>
    </source>
</evidence>
<evidence type="ECO:0000312" key="12">
    <source>
        <dbReference type="EMBL" id="CAB87924.1"/>
    </source>
</evidence>
<evidence type="ECO:0007744" key="13">
    <source>
    </source>
</evidence>
<evidence type="ECO:0007744" key="14">
    <source>
    </source>
</evidence>
<evidence type="ECO:0007744" key="15">
    <source>
    </source>
</evidence>
<evidence type="ECO:0007744" key="16">
    <source>
    </source>
</evidence>
<reference key="1">
    <citation type="journal article" date="2000" name="Nature">
        <title>Sequence and analysis of chromosome 5 of the plant Arabidopsis thaliana.</title>
        <authorList>
            <person name="Tabata S."/>
            <person name="Kaneko T."/>
            <person name="Nakamura Y."/>
            <person name="Kotani H."/>
            <person name="Kato T."/>
            <person name="Asamizu E."/>
            <person name="Miyajima N."/>
            <person name="Sasamoto S."/>
            <person name="Kimura T."/>
            <person name="Hosouchi T."/>
            <person name="Kawashima K."/>
            <person name="Kohara M."/>
            <person name="Matsumoto M."/>
            <person name="Matsuno A."/>
            <person name="Muraki A."/>
            <person name="Nakayama S."/>
            <person name="Nakazaki N."/>
            <person name="Naruo K."/>
            <person name="Okumura S."/>
            <person name="Shinpo S."/>
            <person name="Takeuchi C."/>
            <person name="Wada T."/>
            <person name="Watanabe A."/>
            <person name="Yamada M."/>
            <person name="Yasuda M."/>
            <person name="Sato S."/>
            <person name="de la Bastide M."/>
            <person name="Huang E."/>
            <person name="Spiegel L."/>
            <person name="Gnoj L."/>
            <person name="O'Shaughnessy A."/>
            <person name="Preston R."/>
            <person name="Habermann K."/>
            <person name="Murray J."/>
            <person name="Johnson D."/>
            <person name="Rohlfing T."/>
            <person name="Nelson J."/>
            <person name="Stoneking T."/>
            <person name="Pepin K."/>
            <person name="Spieth J."/>
            <person name="Sekhon M."/>
            <person name="Armstrong J."/>
            <person name="Becker M."/>
            <person name="Belter E."/>
            <person name="Cordum H."/>
            <person name="Cordes M."/>
            <person name="Courtney L."/>
            <person name="Courtney W."/>
            <person name="Dante M."/>
            <person name="Du H."/>
            <person name="Edwards J."/>
            <person name="Fryman J."/>
            <person name="Haakensen B."/>
            <person name="Lamar E."/>
            <person name="Latreille P."/>
            <person name="Leonard S."/>
            <person name="Meyer R."/>
            <person name="Mulvaney E."/>
            <person name="Ozersky P."/>
            <person name="Riley A."/>
            <person name="Strowmatt C."/>
            <person name="Wagner-McPherson C."/>
            <person name="Wollam A."/>
            <person name="Yoakum M."/>
            <person name="Bell M."/>
            <person name="Dedhia N."/>
            <person name="Parnell L."/>
            <person name="Shah R."/>
            <person name="Rodriguez M."/>
            <person name="Hoon See L."/>
            <person name="Vil D."/>
            <person name="Baker J."/>
            <person name="Kirchoff K."/>
            <person name="Toth K."/>
            <person name="King L."/>
            <person name="Bahret A."/>
            <person name="Miller B."/>
            <person name="Marra M.A."/>
            <person name="Martienssen R."/>
            <person name="McCombie W.R."/>
            <person name="Wilson R.K."/>
            <person name="Murphy G."/>
            <person name="Bancroft I."/>
            <person name="Volckaert G."/>
            <person name="Wambutt R."/>
            <person name="Duesterhoeft A."/>
            <person name="Stiekema W."/>
            <person name="Pohl T."/>
            <person name="Entian K.-D."/>
            <person name="Terryn N."/>
            <person name="Hartley N."/>
            <person name="Bent E."/>
            <person name="Johnson S."/>
            <person name="Langham S.-A."/>
            <person name="McCullagh B."/>
            <person name="Robben J."/>
            <person name="Grymonprez B."/>
            <person name="Zimmermann W."/>
            <person name="Ramsperger U."/>
            <person name="Wedler H."/>
            <person name="Balke K."/>
            <person name="Wedler E."/>
            <person name="Peters S."/>
            <person name="van Staveren M."/>
            <person name="Dirkse W."/>
            <person name="Mooijman P."/>
            <person name="Klein Lankhorst R."/>
            <person name="Weitzenegger T."/>
            <person name="Bothe G."/>
            <person name="Rose M."/>
            <person name="Hauf J."/>
            <person name="Berneiser S."/>
            <person name="Hempel S."/>
            <person name="Feldpausch M."/>
            <person name="Lamberth S."/>
            <person name="Villarroel R."/>
            <person name="Gielen J."/>
            <person name="Ardiles W."/>
            <person name="Bents O."/>
            <person name="Lemcke K."/>
            <person name="Kolesov G."/>
            <person name="Mayer K.F.X."/>
            <person name="Rudd S."/>
            <person name="Schoof H."/>
            <person name="Schueller C."/>
            <person name="Zaccaria P."/>
            <person name="Mewes H.-W."/>
            <person name="Bevan M."/>
            <person name="Fransz P.F."/>
        </authorList>
    </citation>
    <scope>NUCLEOTIDE SEQUENCE [LARGE SCALE GENOMIC DNA]</scope>
    <source>
        <strain>cv. Columbia</strain>
    </source>
</reference>
<reference key="2">
    <citation type="journal article" date="2017" name="Plant J.">
        <title>Araport11: a complete reannotation of the Arabidopsis thaliana reference genome.</title>
        <authorList>
            <person name="Cheng C.Y."/>
            <person name="Krishnakumar V."/>
            <person name="Chan A.P."/>
            <person name="Thibaud-Nissen F."/>
            <person name="Schobel S."/>
            <person name="Town C.D."/>
        </authorList>
    </citation>
    <scope>GENOME REANNOTATION</scope>
    <source>
        <strain>cv. Columbia</strain>
    </source>
</reference>
<reference key="3">
    <citation type="journal article" date="2003" name="Science">
        <title>Empirical analysis of transcriptional activity in the Arabidopsis genome.</title>
        <authorList>
            <person name="Yamada K."/>
            <person name="Lim J."/>
            <person name="Dale J.M."/>
            <person name="Chen H."/>
            <person name="Shinn P."/>
            <person name="Palm C.J."/>
            <person name="Southwick A.M."/>
            <person name="Wu H.C."/>
            <person name="Kim C.J."/>
            <person name="Nguyen M."/>
            <person name="Pham P.K."/>
            <person name="Cheuk R.F."/>
            <person name="Karlin-Newmann G."/>
            <person name="Liu S.X."/>
            <person name="Lam B."/>
            <person name="Sakano H."/>
            <person name="Wu T."/>
            <person name="Yu G."/>
            <person name="Miranda M."/>
            <person name="Quach H.L."/>
            <person name="Tripp M."/>
            <person name="Chang C.H."/>
            <person name="Lee J.M."/>
            <person name="Toriumi M.J."/>
            <person name="Chan M.M."/>
            <person name="Tang C.C."/>
            <person name="Onodera C.S."/>
            <person name="Deng J.M."/>
            <person name="Akiyama K."/>
            <person name="Ansari Y."/>
            <person name="Arakawa T."/>
            <person name="Banh J."/>
            <person name="Banno F."/>
            <person name="Bowser L."/>
            <person name="Brooks S.Y."/>
            <person name="Carninci P."/>
            <person name="Chao Q."/>
            <person name="Choy N."/>
            <person name="Enju A."/>
            <person name="Goldsmith A.D."/>
            <person name="Gurjal M."/>
            <person name="Hansen N.F."/>
            <person name="Hayashizaki Y."/>
            <person name="Johnson-Hopson C."/>
            <person name="Hsuan V.W."/>
            <person name="Iida K."/>
            <person name="Karnes M."/>
            <person name="Khan S."/>
            <person name="Koesema E."/>
            <person name="Ishida J."/>
            <person name="Jiang P.X."/>
            <person name="Jones T."/>
            <person name="Kawai J."/>
            <person name="Kamiya A."/>
            <person name="Meyers C."/>
            <person name="Nakajima M."/>
            <person name="Narusaka M."/>
            <person name="Seki M."/>
            <person name="Sakurai T."/>
            <person name="Satou M."/>
            <person name="Tamse R."/>
            <person name="Vaysberg M."/>
            <person name="Wallender E.K."/>
            <person name="Wong C."/>
            <person name="Yamamura Y."/>
            <person name="Yuan S."/>
            <person name="Shinozaki K."/>
            <person name="Davis R.W."/>
            <person name="Theologis A."/>
            <person name="Ecker J.R."/>
        </authorList>
    </citation>
    <scope>NUCLEOTIDE SEQUENCE [LARGE SCALE MRNA] (ISOFORM 1)</scope>
    <source>
        <strain>cv. Columbia</strain>
    </source>
</reference>
<reference key="4">
    <citation type="journal article" date="2008" name="J. Proteome Res.">
        <title>Site-specific phosphorylation profiling of Arabidopsis proteins by mass spectrometry and peptide chip analysis.</title>
        <authorList>
            <person name="de la Fuente van Bentem S."/>
            <person name="Anrather D."/>
            <person name="Dohnal I."/>
            <person name="Roitinger E."/>
            <person name="Csaszar E."/>
            <person name="Joore J."/>
            <person name="Buijnink J."/>
            <person name="Carreri A."/>
            <person name="Forzani C."/>
            <person name="Lorkovic Z.J."/>
            <person name="Barta A."/>
            <person name="Lecourieux D."/>
            <person name="Verhounig A."/>
            <person name="Jonak C."/>
            <person name="Hirt H."/>
        </authorList>
    </citation>
    <scope>PHOSPHORYLATION [LARGE SCALE ANALYSIS] AT SER-975</scope>
    <scope>IDENTIFICATION BY MASS SPECTROMETRY [LARGE SCALE ANALYSIS]</scope>
    <source>
        <tissue>Root</tissue>
    </source>
</reference>
<reference key="5">
    <citation type="journal article" date="2009" name="J. Proteomics">
        <title>Phosphoproteomic analysis of nuclei-enriched fractions from Arabidopsis thaliana.</title>
        <authorList>
            <person name="Jones A.M.E."/>
            <person name="MacLean D."/>
            <person name="Studholme D.J."/>
            <person name="Serna-Sanz A."/>
            <person name="Andreasson E."/>
            <person name="Rathjen J.P."/>
            <person name="Peck S.C."/>
        </authorList>
    </citation>
    <scope>PHOSPHORYLATION [LARGE SCALE ANALYSIS] AT TYR-970; SER-975 AND THR-980</scope>
    <scope>IDENTIFICATION BY MASS SPECTROMETRY [LARGE SCALE ANALYSIS]</scope>
    <source>
        <strain>cv. Columbia</strain>
    </source>
</reference>
<reference key="6">
    <citation type="journal article" date="2009" name="Plant Physiol.">
        <title>Large-scale Arabidopsis phosphoproteome profiling reveals novel chloroplast kinase substrates and phosphorylation networks.</title>
        <authorList>
            <person name="Reiland S."/>
            <person name="Messerli G."/>
            <person name="Baerenfaller K."/>
            <person name="Gerrits B."/>
            <person name="Endler A."/>
            <person name="Grossmann J."/>
            <person name="Gruissem W."/>
            <person name="Baginsky S."/>
        </authorList>
    </citation>
    <scope>PHOSPHORYLATION [LARGE SCALE ANALYSIS] AT SER-975</scope>
    <scope>IDENTIFICATION BY MASS SPECTROMETRY [LARGE SCALE ANALYSIS]</scope>
</reference>
<reference key="7">
    <citation type="journal article" date="2010" name="Planta">
        <title>The AtTudor2, a protein with SN-Tudor domains, is involved in control of seed germination in Arabidopsis.</title>
        <authorList>
            <person name="Liu S."/>
            <person name="Jia J."/>
            <person name="Gao Y."/>
            <person name="Zhang B."/>
            <person name="Han Y."/>
        </authorList>
    </citation>
    <scope>DISRUPTION PHENOTYPE</scope>
    <scope>TISSUE SPECIFICITY</scope>
    <scope>GENE FAMILY</scope>
    <scope>NOMENCLATURE</scope>
    <source>
        <strain>cv. Columbia</strain>
    </source>
</reference>
<reference key="8">
    <citation type="journal article" date="2010" name="Plant Cell">
        <title>The RNA binding protein Tudor-SN is essential for stress tolerance and stabilizes levels of stress-responsive mRNAs encoding secreted proteins in Arabidopsis.</title>
        <authorList>
            <person name="Frei dit Frey N."/>
            <person name="Muller P."/>
            <person name="Jammes F."/>
            <person name="Kizis D."/>
            <person name="Leung J."/>
            <person name="Perrot-Rechenmann C."/>
            <person name="Bianchi M.W."/>
        </authorList>
    </citation>
    <scope>FUNCTION</scope>
    <scope>DISRUPTION PHENOTYPE</scope>
    <scope>SUBCELLULAR LOCATION</scope>
    <scope>TISSUE SPECIFICITY</scope>
    <scope>PHOSPHORYLATION AT 975</scope>
    <source>
        <strain>cv. Wassilewskija</strain>
    </source>
</reference>
<reference key="9">
    <citation type="journal article" date="2012" name="Mol. Cell. Proteomics">
        <title>Comparative large-scale characterisation of plant vs. mammal proteins reveals similar and idiosyncratic N-alpha acetylation features.</title>
        <authorList>
            <person name="Bienvenut W.V."/>
            <person name="Sumpton D."/>
            <person name="Martinez A."/>
            <person name="Lilla S."/>
            <person name="Espagne C."/>
            <person name="Meinnel T."/>
            <person name="Giglione C."/>
        </authorList>
    </citation>
    <scope>ACETYLATION [LARGE SCALE ANALYSIS] AT ALA-2</scope>
    <scope>CLEAVAGE OF INITIATOR METHIONINE [LARGE SCALE ANALYSIS]</scope>
    <scope>IDENTIFICATION BY MASS SPECTROMETRY [LARGE SCALE ANALYSIS]</scope>
</reference>
<reference key="10">
    <citation type="journal article" date="2014" name="J. Exp. Bot.">
        <title>Tudor-SN, a component of stress granules, regulates growth under salt stress by modulating GA20ox3 mRNA levels in Arabidopsis.</title>
        <authorList>
            <person name="Yan C."/>
            <person name="Yan Z."/>
            <person name="Wang Y."/>
            <person name="Yan X."/>
            <person name="Han Y."/>
        </authorList>
    </citation>
    <scope>FUNCTION</scope>
    <scope>DISRUPTION PHENOTYPE</scope>
    <scope>INDUCTION BY SALT</scope>
    <scope>SUBCELLULAR LOCATION</scope>
    <source>
        <strain>cv. Columbia</strain>
    </source>
</reference>
<reference key="11">
    <citation type="journal article" date="2015" name="Plant Cell">
        <title>Tudor staphylococcal nuclease links formation of stress granules and processing bodies with mRNA catabolism in Arabidopsis.</title>
        <authorList>
            <person name="Gutierrez-Beltran E."/>
            <person name="Moschou P.N."/>
            <person name="Smertenko A.P."/>
            <person name="Bozhkov P.V."/>
        </authorList>
    </citation>
    <scope>FUNCTION</scope>
    <scope>DISRUPTION PHENOTYPE</scope>
    <scope>SUBCELLULAR LOCATION</scope>
    <scope>DOMAIN</scope>
    <scope>ACTIVITY REGULATION</scope>
    <source>
        <strain>cv. Landsberg erecta</strain>
    </source>
</reference>
<reference key="12">
    <citation type="journal article" date="2015" name="Plant Signal. Behav.">
        <title>Tudor staphylococcal nuclease plays two antagonistic roles in RNA metabolism under stress.</title>
        <authorList>
            <person name="Gutierrez-Beltran E."/>
            <person name="Bozhkov P.V."/>
            <person name="Moschou P.N."/>
        </authorList>
    </citation>
    <scope>FUNCTION</scope>
    <scope>DISRUPTION PHENOTYPE</scope>
    <source>
        <strain>cv. Columbia</strain>
        <strain>cv. Landsberg erecta</strain>
    </source>
</reference>
<gene>
    <name evidence="9" type="primary">TSN1</name>
    <name evidence="11" type="ordered locus">At5g07350</name>
    <name evidence="12" type="ORF">T2I1.60</name>
</gene>
<accession>Q8VZG7</accession>
<accession>F4K6N0</accession>
<accession>Q9LY25</accession>
<feature type="initiator methionine" description="Removed" evidence="16">
    <location>
        <position position="1"/>
    </location>
</feature>
<feature type="chain" id="PRO_0000437883" description="Ribonuclease TUDOR 1">
    <location>
        <begin position="2"/>
        <end position="991"/>
    </location>
</feature>
<feature type="domain" description="TNase-like 1" evidence="2">
    <location>
        <begin position="8"/>
        <end position="151"/>
    </location>
</feature>
<feature type="domain" description="TNase-like 2" evidence="2">
    <location>
        <begin position="186"/>
        <end position="364"/>
    </location>
</feature>
<feature type="domain" description="TNase-like 3" evidence="2">
    <location>
        <begin position="378"/>
        <end position="557"/>
    </location>
</feature>
<feature type="domain" description="TNase-like 4" evidence="2">
    <location>
        <begin position="587"/>
        <end position="714"/>
    </location>
</feature>
<feature type="domain" description="Tudor" evidence="1">
    <location>
        <begin position="782"/>
        <end position="847"/>
    </location>
</feature>
<feature type="region of interest" description="Disordered" evidence="3">
    <location>
        <begin position="227"/>
        <end position="250"/>
    </location>
</feature>
<feature type="region of interest" description="Disordered" evidence="3">
    <location>
        <begin position="971"/>
        <end position="991"/>
    </location>
</feature>
<feature type="modified residue" description="N-acetylalanine" evidence="16">
    <location>
        <position position="2"/>
    </location>
</feature>
<feature type="modified residue" description="Phosphotyrosine" evidence="14">
    <location>
        <position position="970"/>
    </location>
</feature>
<feature type="modified residue" description="Phosphoserine" evidence="13 14 15">
    <location>
        <position position="975"/>
    </location>
</feature>
<feature type="modified residue" description="Phosphothreonine" evidence="14">
    <location>
        <position position="980"/>
    </location>
</feature>
<feature type="splice variant" id="VSP_058574" description="In isoform 2.">
    <original>RR</original>
    <variation>LEIRGSLNHAYKQKKSRD</variation>
    <location>
        <begin position="990"/>
        <end position="991"/>
    </location>
</feature>